<gene>
    <name type="primary">79</name>
</gene>
<sequence length="72" mass="7876">MEGRRVKKHLITVVVAFATAVGAMALADPYEASADPITFDQRAFPCEEDEVLGFAPEFGPDRVGCIHVDQIR</sequence>
<proteinExistence type="predicted"/>
<keyword id="KW-1185">Reference proteome</keyword>
<reference key="1">
    <citation type="journal article" date="1993" name="Mol. Microbiol.">
        <title>DNA sequence, structure and gene expression of mycobacteriophage L5: a phage system for mycobacterial genetics.</title>
        <authorList>
            <person name="Hatfull G.F."/>
            <person name="Sarkis G.J."/>
        </authorList>
    </citation>
    <scope>NUCLEOTIDE SEQUENCE [LARGE SCALE GENOMIC DNA]</scope>
</reference>
<feature type="chain" id="PRO_0000164822" description="Gene 79 protein">
    <location>
        <begin position="1"/>
        <end position="72"/>
    </location>
</feature>
<organismHost>
    <name type="scientific">Mycobacterium</name>
    <dbReference type="NCBI Taxonomy" id="1763"/>
</organismHost>
<dbReference type="EMBL" id="Z18946">
    <property type="protein sequence ID" value="CAA79455.1"/>
    <property type="molecule type" value="Genomic_DNA"/>
</dbReference>
<dbReference type="PIR" id="S31024">
    <property type="entry name" value="S31024"/>
</dbReference>
<dbReference type="RefSeq" id="NP_039743.1">
    <property type="nucleotide sequence ID" value="NC_001335.1"/>
</dbReference>
<dbReference type="GeneID" id="2942976"/>
<dbReference type="KEGG" id="vg:2942976"/>
<dbReference type="OrthoDB" id="27352at10239"/>
<dbReference type="Proteomes" id="UP000002123">
    <property type="component" value="Genome"/>
</dbReference>
<dbReference type="InterPro" id="IPR035353">
    <property type="entry name" value="Gp79"/>
</dbReference>
<dbReference type="Pfam" id="PF17463">
    <property type="entry name" value="GP79"/>
    <property type="match status" value="1"/>
</dbReference>
<organism>
    <name type="scientific">Mycobacterium phage L5</name>
    <name type="common">Mycobacteriophage L5</name>
    <dbReference type="NCBI Taxonomy" id="31757"/>
    <lineage>
        <taxon>Viruses</taxon>
        <taxon>Duplodnaviria</taxon>
        <taxon>Heunggongvirae</taxon>
        <taxon>Uroviricota</taxon>
        <taxon>Caudoviricetes</taxon>
        <taxon>Fromanvirus</taxon>
    </lineage>
</organism>
<protein>
    <recommendedName>
        <fullName>Gene 79 protein</fullName>
    </recommendedName>
    <alternativeName>
        <fullName>Gp79</fullName>
    </alternativeName>
</protein>
<name>VG79_BPML5</name>
<accession>Q05294</accession>